<protein>
    <recommendedName>
        <fullName>Elongation factor 1-alpha</fullName>
        <shortName>EF-1-alpha</shortName>
    </recommendedName>
</protein>
<proteinExistence type="evidence at transcript level"/>
<dbReference type="EMBL" id="AF378368">
    <property type="protein sequence ID" value="AAK54650.1"/>
    <property type="molecule type" value="mRNA"/>
</dbReference>
<dbReference type="EMBL" id="GG704916">
    <property type="protein sequence ID" value="EAS32684.3"/>
    <property type="molecule type" value="Genomic_DNA"/>
</dbReference>
<dbReference type="RefSeq" id="XP_001244267.1">
    <property type="nucleotide sequence ID" value="XM_001244266.2"/>
</dbReference>
<dbReference type="SMR" id="Q96WZ1"/>
<dbReference type="FunCoup" id="Q96WZ1">
    <property type="interactions" value="1549"/>
</dbReference>
<dbReference type="STRING" id="246410.Q96WZ1"/>
<dbReference type="GeneID" id="4563312"/>
<dbReference type="KEGG" id="cim:CIMG_03708"/>
<dbReference type="VEuPathDB" id="FungiDB:CIMG_03708"/>
<dbReference type="InParanoid" id="Q96WZ1"/>
<dbReference type="OMA" id="AIRDMGM"/>
<dbReference type="OrthoDB" id="342024at2759"/>
<dbReference type="Proteomes" id="UP000001261">
    <property type="component" value="Unassembled WGS sequence"/>
</dbReference>
<dbReference type="GO" id="GO:0005737">
    <property type="term" value="C:cytoplasm"/>
    <property type="evidence" value="ECO:0007669"/>
    <property type="project" value="UniProtKB-SubCell"/>
</dbReference>
<dbReference type="GO" id="GO:0005525">
    <property type="term" value="F:GTP binding"/>
    <property type="evidence" value="ECO:0007669"/>
    <property type="project" value="UniProtKB-KW"/>
</dbReference>
<dbReference type="GO" id="GO:0003924">
    <property type="term" value="F:GTPase activity"/>
    <property type="evidence" value="ECO:0007669"/>
    <property type="project" value="InterPro"/>
</dbReference>
<dbReference type="GO" id="GO:0003746">
    <property type="term" value="F:translation elongation factor activity"/>
    <property type="evidence" value="ECO:0007669"/>
    <property type="project" value="UniProtKB-KW"/>
</dbReference>
<dbReference type="CDD" id="cd01883">
    <property type="entry name" value="EF1_alpha"/>
    <property type="match status" value="1"/>
</dbReference>
<dbReference type="CDD" id="cd03693">
    <property type="entry name" value="EF1_alpha_II"/>
    <property type="match status" value="1"/>
</dbReference>
<dbReference type="CDD" id="cd03705">
    <property type="entry name" value="EF1_alpha_III"/>
    <property type="match status" value="1"/>
</dbReference>
<dbReference type="FunFam" id="2.40.30.10:FF:000003">
    <property type="entry name" value="Elongation factor 1-alpha"/>
    <property type="match status" value="1"/>
</dbReference>
<dbReference type="FunFam" id="2.40.30.10:FF:000005">
    <property type="entry name" value="Elongation factor 1-alpha"/>
    <property type="match status" value="1"/>
</dbReference>
<dbReference type="FunFam" id="3.40.50.300:FF:000211">
    <property type="entry name" value="Elongation factor 1-alpha"/>
    <property type="match status" value="1"/>
</dbReference>
<dbReference type="Gene3D" id="3.40.50.300">
    <property type="entry name" value="P-loop containing nucleotide triphosphate hydrolases"/>
    <property type="match status" value="1"/>
</dbReference>
<dbReference type="Gene3D" id="2.40.30.10">
    <property type="entry name" value="Translation factors"/>
    <property type="match status" value="2"/>
</dbReference>
<dbReference type="HAMAP" id="MF_00118_A">
    <property type="entry name" value="EF_Tu_A"/>
    <property type="match status" value="1"/>
</dbReference>
<dbReference type="InterPro" id="IPR004161">
    <property type="entry name" value="EFTu-like_2"/>
</dbReference>
<dbReference type="InterPro" id="IPR031157">
    <property type="entry name" value="G_TR_CS"/>
</dbReference>
<dbReference type="InterPro" id="IPR054696">
    <property type="entry name" value="GTP-eEF1A_C"/>
</dbReference>
<dbReference type="InterPro" id="IPR027417">
    <property type="entry name" value="P-loop_NTPase"/>
</dbReference>
<dbReference type="InterPro" id="IPR000795">
    <property type="entry name" value="T_Tr_GTP-bd_dom"/>
</dbReference>
<dbReference type="InterPro" id="IPR050100">
    <property type="entry name" value="TRAFAC_GTPase_members"/>
</dbReference>
<dbReference type="InterPro" id="IPR009000">
    <property type="entry name" value="Transl_B-barrel_sf"/>
</dbReference>
<dbReference type="InterPro" id="IPR009001">
    <property type="entry name" value="Transl_elong_EF1A/Init_IF2_C"/>
</dbReference>
<dbReference type="InterPro" id="IPR004539">
    <property type="entry name" value="Transl_elong_EF1A_euk/arc"/>
</dbReference>
<dbReference type="NCBIfam" id="TIGR00483">
    <property type="entry name" value="EF-1_alpha"/>
    <property type="match status" value="1"/>
</dbReference>
<dbReference type="NCBIfam" id="NF008969">
    <property type="entry name" value="PRK12317.1"/>
    <property type="match status" value="1"/>
</dbReference>
<dbReference type="PANTHER" id="PTHR23115">
    <property type="entry name" value="TRANSLATION FACTOR"/>
    <property type="match status" value="1"/>
</dbReference>
<dbReference type="Pfam" id="PF22594">
    <property type="entry name" value="GTP-eEF1A_C"/>
    <property type="match status" value="1"/>
</dbReference>
<dbReference type="Pfam" id="PF00009">
    <property type="entry name" value="GTP_EFTU"/>
    <property type="match status" value="1"/>
</dbReference>
<dbReference type="Pfam" id="PF03144">
    <property type="entry name" value="GTP_EFTU_D2"/>
    <property type="match status" value="1"/>
</dbReference>
<dbReference type="PRINTS" id="PR00315">
    <property type="entry name" value="ELONGATNFCT"/>
</dbReference>
<dbReference type="SUPFAM" id="SSF50465">
    <property type="entry name" value="EF-Tu/eEF-1alpha/eIF2-gamma C-terminal domain"/>
    <property type="match status" value="1"/>
</dbReference>
<dbReference type="SUPFAM" id="SSF52540">
    <property type="entry name" value="P-loop containing nucleoside triphosphate hydrolases"/>
    <property type="match status" value="1"/>
</dbReference>
<dbReference type="SUPFAM" id="SSF50447">
    <property type="entry name" value="Translation proteins"/>
    <property type="match status" value="1"/>
</dbReference>
<dbReference type="PROSITE" id="PS00301">
    <property type="entry name" value="G_TR_1"/>
    <property type="match status" value="1"/>
</dbReference>
<dbReference type="PROSITE" id="PS51722">
    <property type="entry name" value="G_TR_2"/>
    <property type="match status" value="1"/>
</dbReference>
<gene>
    <name type="primary">TEF</name>
    <name type="synonym">EF1A</name>
    <name type="ORF">CIMG_03708</name>
</gene>
<evidence type="ECO:0000250" key="1"/>
<evidence type="ECO:0000250" key="2">
    <source>
        <dbReference type="UniProtKB" id="P02994"/>
    </source>
</evidence>
<evidence type="ECO:0000305" key="3"/>
<organism>
    <name type="scientific">Coccidioides immitis (strain RS)</name>
    <name type="common">Valley fever fungus</name>
    <dbReference type="NCBI Taxonomy" id="246410"/>
    <lineage>
        <taxon>Eukaryota</taxon>
        <taxon>Fungi</taxon>
        <taxon>Dikarya</taxon>
        <taxon>Ascomycota</taxon>
        <taxon>Pezizomycotina</taxon>
        <taxon>Eurotiomycetes</taxon>
        <taxon>Eurotiomycetidae</taxon>
        <taxon>Onygenales</taxon>
        <taxon>Onygenaceae</taxon>
        <taxon>Coccidioides</taxon>
    </lineage>
</organism>
<keyword id="KW-0963">Cytoplasm</keyword>
<keyword id="KW-0251">Elongation factor</keyword>
<keyword id="KW-0342">GTP-binding</keyword>
<keyword id="KW-0488">Methylation</keyword>
<keyword id="KW-0547">Nucleotide-binding</keyword>
<keyword id="KW-0648">Protein biosynthesis</keyword>
<keyword id="KW-1185">Reference proteome</keyword>
<name>EF1A_COCIM</name>
<comment type="function">
    <text>This protein promotes the GTP-dependent binding of aminoacyl-tRNA to the A-site of ribosomes during protein biosynthesis.</text>
</comment>
<comment type="subcellular location">
    <subcellularLocation>
        <location>Cytoplasm</location>
    </subcellularLocation>
</comment>
<comment type="similarity">
    <text evidence="3">Belongs to the TRAFAC class translation factor GTPase superfamily. Classic translation factor GTPase family. EF-Tu/EF-1A subfamily.</text>
</comment>
<accession>Q96WZ1</accession>
<accession>Q1E155</accession>
<feature type="initiator methionine" description="Removed" evidence="2">
    <location>
        <position position="1"/>
    </location>
</feature>
<feature type="chain" id="PRO_0000090957" description="Elongation factor 1-alpha">
    <location>
        <begin position="2"/>
        <end position="460"/>
    </location>
</feature>
<feature type="domain" description="tr-type G">
    <location>
        <begin position="6"/>
        <end position="241"/>
    </location>
</feature>
<feature type="region of interest" description="G1" evidence="1">
    <location>
        <begin position="15"/>
        <end position="22"/>
    </location>
</feature>
<feature type="region of interest" description="G2" evidence="1">
    <location>
        <begin position="71"/>
        <end position="75"/>
    </location>
</feature>
<feature type="region of interest" description="G3" evidence="1">
    <location>
        <begin position="92"/>
        <end position="95"/>
    </location>
</feature>
<feature type="region of interest" description="G4" evidence="1">
    <location>
        <begin position="154"/>
        <end position="157"/>
    </location>
</feature>
<feature type="region of interest" description="G5" evidence="1">
    <location>
        <begin position="193"/>
        <end position="195"/>
    </location>
</feature>
<feature type="binding site" evidence="1">
    <location>
        <begin position="15"/>
        <end position="22"/>
    </location>
    <ligand>
        <name>GTP</name>
        <dbReference type="ChEBI" id="CHEBI:37565"/>
    </ligand>
</feature>
<feature type="binding site" evidence="1">
    <location>
        <begin position="92"/>
        <end position="96"/>
    </location>
    <ligand>
        <name>GTP</name>
        <dbReference type="ChEBI" id="CHEBI:37565"/>
    </ligand>
</feature>
<feature type="binding site" evidence="1">
    <location>
        <begin position="154"/>
        <end position="157"/>
    </location>
    <ligand>
        <name>GTP</name>
        <dbReference type="ChEBI" id="CHEBI:37565"/>
    </ligand>
</feature>
<feature type="modified residue" description="N,N,N-trimethylglycine" evidence="2">
    <location>
        <position position="2"/>
    </location>
</feature>
<feature type="modified residue" description="N6,N6-dimethyllysine; alternate" evidence="2">
    <location>
        <position position="3"/>
    </location>
</feature>
<feature type="modified residue" description="N6-methyllysine; alternate" evidence="2">
    <location>
        <position position="3"/>
    </location>
</feature>
<feature type="modified residue" description="N6-methyllysine" evidence="2">
    <location>
        <position position="31"/>
    </location>
</feature>
<feature type="modified residue" description="N6,N6,N6-trimethyllysine" evidence="2">
    <location>
        <position position="80"/>
    </location>
</feature>
<feature type="modified residue" description="N6,N6-dimethyllysine; alternate" evidence="2">
    <location>
        <position position="317"/>
    </location>
</feature>
<feature type="modified residue" description="N6-methyllysine; alternate" evidence="2">
    <location>
        <position position="317"/>
    </location>
</feature>
<feature type="modified residue" description="N6-methyllysine" evidence="2">
    <location>
        <position position="391"/>
    </location>
</feature>
<feature type="sequence conflict" description="In Ref. 1; AAK54650." evidence="3" ref="1">
    <original>S</original>
    <variation>T</variation>
    <location>
        <position position="223"/>
    </location>
</feature>
<sequence>MGKEEKTHINLVVIGHVDSGKSTTTGHLIYKCGGIDNRTIEKFEKEAEELGKKSFKYAWVLDKLKAERERGITIDIALWKFETPKYHVTVIDAPGHRDFIKNMITGTSQADCAILIIAAGTGEFEAGISKDGQTREHALLAFTLGVKQLIVAINKMDSTNWSEPRFNEIVKEVSNFIKKVGYNPKAVPFVPISGFEGDNMIQPSTNAPWYKGWNKETASGKHSGKTLLDAIDAIDPPTRPTEKPLRLPLQDVYKISGIGTVPVGRVETGVIKPGMVVTFAPSNVTTEVKSVEMHHQQLTQGNPGDNVGFNVKNVSVKEVRRGNVAGDSKNDPPKGCDSFNAQVIVLNHPGQVGAGYAPVLDCHTAHIACKFSELLEKIDRRTGKSVENNPKFIKSGDAAIVKMVPSKPMCVEAFTDYPPLGRFAVRDMRQTVAVGVIKSVEKSEKTGGKVTKAAQKAAKK</sequence>
<reference key="1">
    <citation type="submission" date="2001-05" db="EMBL/GenBank/DDBJ databases">
        <authorList>
            <person name="Shi Q."/>
            <person name="Ivey F.D."/>
            <person name="Magee D.M."/>
            <person name="Cox R.A."/>
        </authorList>
    </citation>
    <scope>NUCLEOTIDE SEQUENCE [MRNA]</scope>
</reference>
<reference key="2">
    <citation type="journal article" date="2009" name="Genome Res.">
        <title>Comparative genomic analyses of the human fungal pathogens Coccidioides and their relatives.</title>
        <authorList>
            <person name="Sharpton T.J."/>
            <person name="Stajich J.E."/>
            <person name="Rounsley S.D."/>
            <person name="Gardner M.J."/>
            <person name="Wortman J.R."/>
            <person name="Jordar V.S."/>
            <person name="Maiti R."/>
            <person name="Kodira C.D."/>
            <person name="Neafsey D.E."/>
            <person name="Zeng Q."/>
            <person name="Hung C.-Y."/>
            <person name="McMahan C."/>
            <person name="Muszewska A."/>
            <person name="Grynberg M."/>
            <person name="Mandel M.A."/>
            <person name="Kellner E.M."/>
            <person name="Barker B.M."/>
            <person name="Galgiani J.N."/>
            <person name="Orbach M.J."/>
            <person name="Kirkland T.N."/>
            <person name="Cole G.T."/>
            <person name="Henn M.R."/>
            <person name="Birren B.W."/>
            <person name="Taylor J.W."/>
        </authorList>
    </citation>
    <scope>NUCLEOTIDE SEQUENCE [LARGE SCALE GENOMIC DNA]</scope>
    <source>
        <strain>RS</strain>
    </source>
</reference>
<reference key="3">
    <citation type="journal article" date="2010" name="Genome Res.">
        <title>Population genomic sequencing of Coccidioides fungi reveals recent hybridization and transposon control.</title>
        <authorList>
            <person name="Neafsey D.E."/>
            <person name="Barker B.M."/>
            <person name="Sharpton T.J."/>
            <person name="Stajich J.E."/>
            <person name="Park D.J."/>
            <person name="Whiston E."/>
            <person name="Hung C.-Y."/>
            <person name="McMahan C."/>
            <person name="White J."/>
            <person name="Sykes S."/>
            <person name="Heiman D."/>
            <person name="Young S."/>
            <person name="Zeng Q."/>
            <person name="Abouelleil A."/>
            <person name="Aftuck L."/>
            <person name="Bessette D."/>
            <person name="Brown A."/>
            <person name="FitzGerald M."/>
            <person name="Lui A."/>
            <person name="Macdonald J.P."/>
            <person name="Priest M."/>
            <person name="Orbach M.J."/>
            <person name="Galgiani J.N."/>
            <person name="Kirkland T.N."/>
            <person name="Cole G.T."/>
            <person name="Birren B.W."/>
            <person name="Henn M.R."/>
            <person name="Taylor J.W."/>
            <person name="Rounsley S.D."/>
        </authorList>
    </citation>
    <scope>GENOME REANNOTATION</scope>
    <source>
        <strain>RS</strain>
    </source>
</reference>